<reference key="1">
    <citation type="journal article" date="1995" name="Microbiology">
        <title>A 10 kb nucleotide sequence at the 5' flanking region (32 degrees) of srfAA of the Bacillus subtilis chromosome.</title>
        <authorList>
            <person name="Fujishima Y."/>
            <person name="Yamane K."/>
        </authorList>
    </citation>
    <scope>NUCLEOTIDE SEQUENCE [GENOMIC DNA]</scope>
    <source>
        <strain>168</strain>
    </source>
</reference>
<reference key="2">
    <citation type="journal article" date="1995" name="Mol. Microbiol.">
        <title>Differential expression of two closely related deoxyribonuclease genes, nucA and nucB, in Bacillus subtilis.</title>
        <authorList>
            <person name="van Sinderen D."/>
            <person name="Kiewiet R."/>
            <person name="Venema G."/>
        </authorList>
    </citation>
    <scope>NUCLEOTIDE SEQUENCE [GENOMIC DNA]</scope>
</reference>
<reference key="3">
    <citation type="journal article" date="1996" name="Microbiology">
        <title>The 25 degrees-36 degrees region of the Bacillus subtilis chromosome: determination of the sequence of a 146 kb segment and identification of 113 genes.</title>
        <authorList>
            <person name="Yamane K."/>
            <person name="Kumano M."/>
            <person name="Kurita K."/>
        </authorList>
    </citation>
    <scope>NUCLEOTIDE SEQUENCE [GENOMIC DNA]</scope>
    <source>
        <strain>168</strain>
    </source>
</reference>
<reference key="4">
    <citation type="journal article" date="1997" name="Nature">
        <title>The complete genome sequence of the Gram-positive bacterium Bacillus subtilis.</title>
        <authorList>
            <person name="Kunst F."/>
            <person name="Ogasawara N."/>
            <person name="Moszer I."/>
            <person name="Albertini A.M."/>
            <person name="Alloni G."/>
            <person name="Azevedo V."/>
            <person name="Bertero M.G."/>
            <person name="Bessieres P."/>
            <person name="Bolotin A."/>
            <person name="Borchert S."/>
            <person name="Borriss R."/>
            <person name="Boursier L."/>
            <person name="Brans A."/>
            <person name="Braun M."/>
            <person name="Brignell S.C."/>
            <person name="Bron S."/>
            <person name="Brouillet S."/>
            <person name="Bruschi C.V."/>
            <person name="Caldwell B."/>
            <person name="Capuano V."/>
            <person name="Carter N.M."/>
            <person name="Choi S.-K."/>
            <person name="Codani J.-J."/>
            <person name="Connerton I.F."/>
            <person name="Cummings N.J."/>
            <person name="Daniel R.A."/>
            <person name="Denizot F."/>
            <person name="Devine K.M."/>
            <person name="Duesterhoeft A."/>
            <person name="Ehrlich S.D."/>
            <person name="Emmerson P.T."/>
            <person name="Entian K.-D."/>
            <person name="Errington J."/>
            <person name="Fabret C."/>
            <person name="Ferrari E."/>
            <person name="Foulger D."/>
            <person name="Fritz C."/>
            <person name="Fujita M."/>
            <person name="Fujita Y."/>
            <person name="Fuma S."/>
            <person name="Galizzi A."/>
            <person name="Galleron N."/>
            <person name="Ghim S.-Y."/>
            <person name="Glaser P."/>
            <person name="Goffeau A."/>
            <person name="Golightly E.J."/>
            <person name="Grandi G."/>
            <person name="Guiseppi G."/>
            <person name="Guy B.J."/>
            <person name="Haga K."/>
            <person name="Haiech J."/>
            <person name="Harwood C.R."/>
            <person name="Henaut A."/>
            <person name="Hilbert H."/>
            <person name="Holsappel S."/>
            <person name="Hosono S."/>
            <person name="Hullo M.-F."/>
            <person name="Itaya M."/>
            <person name="Jones L.-M."/>
            <person name="Joris B."/>
            <person name="Karamata D."/>
            <person name="Kasahara Y."/>
            <person name="Klaerr-Blanchard M."/>
            <person name="Klein C."/>
            <person name="Kobayashi Y."/>
            <person name="Koetter P."/>
            <person name="Koningstein G."/>
            <person name="Krogh S."/>
            <person name="Kumano M."/>
            <person name="Kurita K."/>
            <person name="Lapidus A."/>
            <person name="Lardinois S."/>
            <person name="Lauber J."/>
            <person name="Lazarevic V."/>
            <person name="Lee S.-M."/>
            <person name="Levine A."/>
            <person name="Liu H."/>
            <person name="Masuda S."/>
            <person name="Mauel C."/>
            <person name="Medigue C."/>
            <person name="Medina N."/>
            <person name="Mellado R.P."/>
            <person name="Mizuno M."/>
            <person name="Moestl D."/>
            <person name="Nakai S."/>
            <person name="Noback M."/>
            <person name="Noone D."/>
            <person name="O'Reilly M."/>
            <person name="Ogawa K."/>
            <person name="Ogiwara A."/>
            <person name="Oudega B."/>
            <person name="Park S.-H."/>
            <person name="Parro V."/>
            <person name="Pohl T.M."/>
            <person name="Portetelle D."/>
            <person name="Porwollik S."/>
            <person name="Prescott A.M."/>
            <person name="Presecan E."/>
            <person name="Pujic P."/>
            <person name="Purnelle B."/>
            <person name="Rapoport G."/>
            <person name="Rey M."/>
            <person name="Reynolds S."/>
            <person name="Rieger M."/>
            <person name="Rivolta C."/>
            <person name="Rocha E."/>
            <person name="Roche B."/>
            <person name="Rose M."/>
            <person name="Sadaie Y."/>
            <person name="Sato T."/>
            <person name="Scanlan E."/>
            <person name="Schleich S."/>
            <person name="Schroeter R."/>
            <person name="Scoffone F."/>
            <person name="Sekiguchi J."/>
            <person name="Sekowska A."/>
            <person name="Seror S.J."/>
            <person name="Serror P."/>
            <person name="Shin B.-S."/>
            <person name="Soldo B."/>
            <person name="Sorokin A."/>
            <person name="Tacconi E."/>
            <person name="Takagi T."/>
            <person name="Takahashi H."/>
            <person name="Takemaru K."/>
            <person name="Takeuchi M."/>
            <person name="Tamakoshi A."/>
            <person name="Tanaka T."/>
            <person name="Terpstra P."/>
            <person name="Tognoni A."/>
            <person name="Tosato V."/>
            <person name="Uchiyama S."/>
            <person name="Vandenbol M."/>
            <person name="Vannier F."/>
            <person name="Vassarotti A."/>
            <person name="Viari A."/>
            <person name="Wambutt R."/>
            <person name="Wedler E."/>
            <person name="Wedler H."/>
            <person name="Weitzenegger T."/>
            <person name="Winters P."/>
            <person name="Wipat A."/>
            <person name="Yamamoto H."/>
            <person name="Yamane K."/>
            <person name="Yasumoto K."/>
            <person name="Yata K."/>
            <person name="Yoshida K."/>
            <person name="Yoshikawa H.-F."/>
            <person name="Zumstein E."/>
            <person name="Yoshikawa H."/>
            <person name="Danchin A."/>
        </authorList>
    </citation>
    <scope>NUCLEOTIDE SEQUENCE [LARGE SCALE GENOMIC DNA]</scope>
    <source>
        <strain>168</strain>
    </source>
</reference>
<reference key="5">
    <citation type="journal article" date="1988" name="J. Bacteriol.">
        <title>Transformation in Bacillus subtilis: involvement of the 17-kilodalton DNA-entry nuclease and the competence-specific 18-kilodalton protein.</title>
        <authorList>
            <person name="Vosman B."/>
            <person name="Kuiken G."/>
            <person name="Kooistra J."/>
            <person name="Venema G."/>
        </authorList>
    </citation>
    <scope>NUCLEOTIDE SEQUENCE [GENOMIC DNA] OF 18-147</scope>
</reference>
<dbReference type="EC" id="3.-.-.-"/>
<dbReference type="EMBL" id="M21672">
    <property type="status" value="NOT_ANNOTATED_CDS"/>
    <property type="molecule type" value="Genomic_DNA"/>
</dbReference>
<dbReference type="EMBL" id="D30762">
    <property type="protein sequence ID" value="BAA06431.1"/>
    <property type="status" value="ALT_INIT"/>
    <property type="molecule type" value="Genomic_DNA"/>
</dbReference>
<dbReference type="EMBL" id="AL009126">
    <property type="protein sequence ID" value="CAB12137.2"/>
    <property type="molecule type" value="Genomic_DNA"/>
</dbReference>
<dbReference type="EMBL" id="D50453">
    <property type="protein sequence ID" value="BAA08977.1"/>
    <property type="status" value="ALT_INIT"/>
    <property type="molecule type" value="Genomic_DNA"/>
</dbReference>
<dbReference type="RefSeq" id="NP_388225.2">
    <property type="nucleotide sequence ID" value="NC_000964.3"/>
</dbReference>
<dbReference type="SMR" id="P12667"/>
<dbReference type="FunCoup" id="P12667">
    <property type="interactions" value="6"/>
</dbReference>
<dbReference type="STRING" id="224308.BSU03430"/>
<dbReference type="PaxDb" id="224308-BSU03430"/>
<dbReference type="DNASU" id="938309"/>
<dbReference type="EnsemblBacteria" id="CAB12137">
    <property type="protein sequence ID" value="CAB12137"/>
    <property type="gene ID" value="BSU_03430"/>
</dbReference>
<dbReference type="GeneID" id="938309"/>
<dbReference type="KEGG" id="bsu:BSU03430"/>
<dbReference type="PATRIC" id="fig|224308.43.peg.353"/>
<dbReference type="eggNOG" id="COG3209">
    <property type="taxonomic scope" value="Bacteria"/>
</dbReference>
<dbReference type="InParanoid" id="P12667"/>
<dbReference type="OrthoDB" id="1906360at2"/>
<dbReference type="BioCyc" id="BSUB:BSU03430-MONOMER"/>
<dbReference type="Proteomes" id="UP000001570">
    <property type="component" value="Chromosome"/>
</dbReference>
<dbReference type="GO" id="GO:0005886">
    <property type="term" value="C:plasma membrane"/>
    <property type="evidence" value="ECO:0007669"/>
    <property type="project" value="UniProtKB-SubCell"/>
</dbReference>
<dbReference type="GO" id="GO:0004518">
    <property type="term" value="F:nuclease activity"/>
    <property type="evidence" value="ECO:0007669"/>
    <property type="project" value="UniProtKB-KW"/>
</dbReference>
<dbReference type="GO" id="GO:0030420">
    <property type="term" value="P:establishment of competence for transformation"/>
    <property type="evidence" value="ECO:0007669"/>
    <property type="project" value="UniProtKB-KW"/>
</dbReference>
<dbReference type="Pfam" id="PF14040">
    <property type="entry name" value="DNase_NucA_NucB"/>
    <property type="match status" value="1"/>
</dbReference>
<protein>
    <recommendedName>
        <fullName>DNA-entry nuclease</fullName>
        <ecNumber>3.-.-.-</ecNumber>
    </recommendedName>
    <alternativeName>
        <fullName>Competence-specific nuclease</fullName>
    </alternativeName>
</protein>
<keyword id="KW-1003">Cell membrane</keyword>
<keyword id="KW-0178">Competence</keyword>
<keyword id="KW-0378">Hydrolase</keyword>
<keyword id="KW-0464">Manganese</keyword>
<keyword id="KW-0472">Membrane</keyword>
<keyword id="KW-0540">Nuclease</keyword>
<keyword id="KW-1185">Reference proteome</keyword>
<keyword id="KW-0812">Transmembrane</keyword>
<keyword id="KW-1133">Transmembrane helix</keyword>
<name>NUCA_BACSU</name>
<organism>
    <name type="scientific">Bacillus subtilis (strain 168)</name>
    <dbReference type="NCBI Taxonomy" id="224308"/>
    <lineage>
        <taxon>Bacteria</taxon>
        <taxon>Bacillati</taxon>
        <taxon>Bacillota</taxon>
        <taxon>Bacilli</taxon>
        <taxon>Bacillales</taxon>
        <taxon>Bacillaceae</taxon>
        <taxon>Bacillus</taxon>
    </lineage>
</organism>
<sequence>MTTDIIKTILLVIVIIAAAAVGLIKGDFFSADQKTSQTKEYDETMAFPSDRYPETAKHIKDAINEGHSEVCTIDRDGAEERREQSLKDVPSKKGYDRDEWPMAMCKEGGEGASVEYISPADNRGAGSWVGHRLTDYPDGTKVLFTIQ</sequence>
<comment type="function">
    <text>By degrading DNA that enters the cell, plays a role in the competence of cells to be transformed. Degrades both double-stranded, linear and covalently closed circular DNA.</text>
</comment>
<comment type="cofactor">
    <cofactor>
        <name>Mn(2+)</name>
        <dbReference type="ChEBI" id="CHEBI:29035"/>
    </cofactor>
    <text>Mn(2+) ion stimulates activity.</text>
</comment>
<comment type="activity regulation">
    <text>The activity can be inhibited by the 18 kDa competence-specific protein nin.</text>
</comment>
<comment type="subunit">
    <text>This protein is a subunit of a 75 kDa protein complex, which governs binding and entry of donor DNA. The complex is a tetramer of two subunits of the DNA-entry nuclease and two subunits of a competence-specific protein. Only the complex is able to bind ds- and ss-DNA.</text>
</comment>
<comment type="subcellular location">
    <subcellularLocation>
        <location>Cell membrane</location>
        <topology>Single-pass membrane protein</topology>
    </subcellularLocation>
</comment>
<comment type="similarity">
    <text evidence="3">To B.subtilis NucB.</text>
</comment>
<comment type="sequence caution" evidence="3">
    <conflict type="erroneous initiation">
        <sequence resource="EMBL-CDS" id="BAA06431"/>
    </conflict>
</comment>
<comment type="sequence caution" evidence="3">
    <conflict type="erroneous initiation">
        <sequence resource="EMBL-CDS" id="BAA08977"/>
    </conflict>
</comment>
<accession>P12667</accession>
<accession>P12668</accession>
<evidence type="ECO:0000255" key="1"/>
<evidence type="ECO:0000256" key="2">
    <source>
        <dbReference type="SAM" id="MobiDB-lite"/>
    </source>
</evidence>
<evidence type="ECO:0000305" key="3"/>
<proteinExistence type="predicted"/>
<gene>
    <name type="primary">nucA</name>
    <name type="synonym">comI</name>
    <name type="ordered locus">BSU03430</name>
</gene>
<feature type="chain" id="PRO_0000057977" description="DNA-entry nuclease">
    <location>
        <begin position="1"/>
        <end position="147"/>
    </location>
</feature>
<feature type="transmembrane region" description="Helical" evidence="1">
    <location>
        <begin position="8"/>
        <end position="24"/>
    </location>
</feature>
<feature type="region of interest" description="Disordered" evidence="2">
    <location>
        <begin position="75"/>
        <end position="100"/>
    </location>
</feature>
<feature type="sequence conflict" description="In Ref. 5." evidence="3" ref="5">
    <original>ADNRGAGSWVGHRLTDYPDGTKVLFTIQ</original>
    <variation>LTTAEQALGSGIGLPITQTAQRFYSQFSKQYIEEEQHIDQIMEAARTFDFISSIYCISKGFYTSCNGLD</variation>
    <location>
        <begin position="120"/>
        <end position="147"/>
    </location>
</feature>